<gene>
    <name type="primary">KANSL1</name>
    <name type="synonym">CENP-36</name>
    <name type="synonym">KIAA1267</name>
    <name type="synonym">MSL1V1</name>
    <name type="synonym">NSL1</name>
</gene>
<reference key="1">
    <citation type="journal article" date="1999" name="DNA Res.">
        <title>Prediction of the coding sequences of unidentified human genes. XV. The complete sequences of 100 new cDNA clones from brain which code for large proteins in vitro.</title>
        <authorList>
            <person name="Nagase T."/>
            <person name="Ishikawa K."/>
            <person name="Kikuno R."/>
            <person name="Hirosawa M."/>
            <person name="Nomura N."/>
            <person name="Ohara O."/>
        </authorList>
    </citation>
    <scope>NUCLEOTIDE SEQUENCE [LARGE SCALE MRNA] (ISOFORMS 1 AND 3)</scope>
    <scope>VARIANTS PRO-718; LEU-1010 AND THR-1085</scope>
    <source>
        <tissue>Brain</tissue>
    </source>
</reference>
<reference key="2">
    <citation type="journal article" date="2004" name="Nat. Genet.">
        <title>Complete sequencing and characterization of 21,243 full-length human cDNAs.</title>
        <authorList>
            <person name="Ota T."/>
            <person name="Suzuki Y."/>
            <person name="Nishikawa T."/>
            <person name="Otsuki T."/>
            <person name="Sugiyama T."/>
            <person name="Irie R."/>
            <person name="Wakamatsu A."/>
            <person name="Hayashi K."/>
            <person name="Sato H."/>
            <person name="Nagai K."/>
            <person name="Kimura K."/>
            <person name="Makita H."/>
            <person name="Sekine M."/>
            <person name="Obayashi M."/>
            <person name="Nishi T."/>
            <person name="Shibahara T."/>
            <person name="Tanaka T."/>
            <person name="Ishii S."/>
            <person name="Yamamoto J."/>
            <person name="Saito K."/>
            <person name="Kawai Y."/>
            <person name="Isono Y."/>
            <person name="Nakamura Y."/>
            <person name="Nagahari K."/>
            <person name="Murakami K."/>
            <person name="Yasuda T."/>
            <person name="Iwayanagi T."/>
            <person name="Wagatsuma M."/>
            <person name="Shiratori A."/>
            <person name="Sudo H."/>
            <person name="Hosoiri T."/>
            <person name="Kaku Y."/>
            <person name="Kodaira H."/>
            <person name="Kondo H."/>
            <person name="Sugawara M."/>
            <person name="Takahashi M."/>
            <person name="Kanda K."/>
            <person name="Yokoi T."/>
            <person name="Furuya T."/>
            <person name="Kikkawa E."/>
            <person name="Omura Y."/>
            <person name="Abe K."/>
            <person name="Kamihara K."/>
            <person name="Katsuta N."/>
            <person name="Sato K."/>
            <person name="Tanikawa M."/>
            <person name="Yamazaki M."/>
            <person name="Ninomiya K."/>
            <person name="Ishibashi T."/>
            <person name="Yamashita H."/>
            <person name="Murakawa K."/>
            <person name="Fujimori K."/>
            <person name="Tanai H."/>
            <person name="Kimata M."/>
            <person name="Watanabe M."/>
            <person name="Hiraoka S."/>
            <person name="Chiba Y."/>
            <person name="Ishida S."/>
            <person name="Ono Y."/>
            <person name="Takiguchi S."/>
            <person name="Watanabe S."/>
            <person name="Yosida M."/>
            <person name="Hotuta T."/>
            <person name="Kusano J."/>
            <person name="Kanehori K."/>
            <person name="Takahashi-Fujii A."/>
            <person name="Hara H."/>
            <person name="Tanase T.-O."/>
            <person name="Nomura Y."/>
            <person name="Togiya S."/>
            <person name="Komai F."/>
            <person name="Hara R."/>
            <person name="Takeuchi K."/>
            <person name="Arita M."/>
            <person name="Imose N."/>
            <person name="Musashino K."/>
            <person name="Yuuki H."/>
            <person name="Oshima A."/>
            <person name="Sasaki N."/>
            <person name="Aotsuka S."/>
            <person name="Yoshikawa Y."/>
            <person name="Matsunawa H."/>
            <person name="Ichihara T."/>
            <person name="Shiohata N."/>
            <person name="Sano S."/>
            <person name="Moriya S."/>
            <person name="Momiyama H."/>
            <person name="Satoh N."/>
            <person name="Takami S."/>
            <person name="Terashima Y."/>
            <person name="Suzuki O."/>
            <person name="Nakagawa S."/>
            <person name="Senoh A."/>
            <person name="Mizoguchi H."/>
            <person name="Goto Y."/>
            <person name="Shimizu F."/>
            <person name="Wakebe H."/>
            <person name="Hishigaki H."/>
            <person name="Watanabe T."/>
            <person name="Sugiyama A."/>
            <person name="Takemoto M."/>
            <person name="Kawakami B."/>
            <person name="Yamazaki M."/>
            <person name="Watanabe K."/>
            <person name="Kumagai A."/>
            <person name="Itakura S."/>
            <person name="Fukuzumi Y."/>
            <person name="Fujimori Y."/>
            <person name="Komiyama M."/>
            <person name="Tashiro H."/>
            <person name="Tanigami A."/>
            <person name="Fujiwara T."/>
            <person name="Ono T."/>
            <person name="Yamada K."/>
            <person name="Fujii Y."/>
            <person name="Ozaki K."/>
            <person name="Hirao M."/>
            <person name="Ohmori Y."/>
            <person name="Kawabata A."/>
            <person name="Hikiji T."/>
            <person name="Kobatake N."/>
            <person name="Inagaki H."/>
            <person name="Ikema Y."/>
            <person name="Okamoto S."/>
            <person name="Okitani R."/>
            <person name="Kawakami T."/>
            <person name="Noguchi S."/>
            <person name="Itoh T."/>
            <person name="Shigeta K."/>
            <person name="Senba T."/>
            <person name="Matsumura K."/>
            <person name="Nakajima Y."/>
            <person name="Mizuno T."/>
            <person name="Morinaga M."/>
            <person name="Sasaki M."/>
            <person name="Togashi T."/>
            <person name="Oyama M."/>
            <person name="Hata H."/>
            <person name="Watanabe M."/>
            <person name="Komatsu T."/>
            <person name="Mizushima-Sugano J."/>
            <person name="Satoh T."/>
            <person name="Shirai Y."/>
            <person name="Takahashi Y."/>
            <person name="Nakagawa K."/>
            <person name="Okumura K."/>
            <person name="Nagase T."/>
            <person name="Nomura N."/>
            <person name="Kikuchi H."/>
            <person name="Masuho Y."/>
            <person name="Yamashita R."/>
            <person name="Nakai K."/>
            <person name="Yada T."/>
            <person name="Nakamura Y."/>
            <person name="Ohara O."/>
            <person name="Isogai T."/>
            <person name="Sugano S."/>
        </authorList>
    </citation>
    <scope>NUCLEOTIDE SEQUENCE [LARGE SCALE MRNA] (ISOFORM 1)</scope>
    <scope>VARIANT LEU-1010</scope>
    <source>
        <tissue>Teratocarcinoma</tissue>
    </source>
</reference>
<reference key="3">
    <citation type="journal article" date="2007" name="BMC Genomics">
        <title>The full-ORF clone resource of the German cDNA consortium.</title>
        <authorList>
            <person name="Bechtel S."/>
            <person name="Rosenfelder H."/>
            <person name="Duda A."/>
            <person name="Schmidt C.P."/>
            <person name="Ernst U."/>
            <person name="Wellenreuther R."/>
            <person name="Mehrle A."/>
            <person name="Schuster C."/>
            <person name="Bahr A."/>
            <person name="Bloecker H."/>
            <person name="Heubner D."/>
            <person name="Hoerlein A."/>
            <person name="Michel G."/>
            <person name="Wedler H."/>
            <person name="Koehrer K."/>
            <person name="Ottenwaelder B."/>
            <person name="Poustka A."/>
            <person name="Wiemann S."/>
            <person name="Schupp I."/>
        </authorList>
    </citation>
    <scope>NUCLEOTIDE SEQUENCE [LARGE SCALE MRNA] (ISOFORMS 1 AND 2)</scope>
    <scope>VARIANT LEU-1010</scope>
    <source>
        <tissue>Fetal kidney</tissue>
        <tissue>Mammary cancer</tissue>
        <tissue>Testis</tissue>
    </source>
</reference>
<reference key="4">
    <citation type="journal article" date="2006" name="Nature">
        <title>DNA sequence of human chromosome 17 and analysis of rearrangement in the human lineage.</title>
        <authorList>
            <person name="Zody M.C."/>
            <person name="Garber M."/>
            <person name="Adams D.J."/>
            <person name="Sharpe T."/>
            <person name="Harrow J."/>
            <person name="Lupski J.R."/>
            <person name="Nicholson C."/>
            <person name="Searle S.M."/>
            <person name="Wilming L."/>
            <person name="Young S.K."/>
            <person name="Abouelleil A."/>
            <person name="Allen N.R."/>
            <person name="Bi W."/>
            <person name="Bloom T."/>
            <person name="Borowsky M.L."/>
            <person name="Bugalter B.E."/>
            <person name="Butler J."/>
            <person name="Chang J.L."/>
            <person name="Chen C.-K."/>
            <person name="Cook A."/>
            <person name="Corum B."/>
            <person name="Cuomo C.A."/>
            <person name="de Jong P.J."/>
            <person name="DeCaprio D."/>
            <person name="Dewar K."/>
            <person name="FitzGerald M."/>
            <person name="Gilbert J."/>
            <person name="Gibson R."/>
            <person name="Gnerre S."/>
            <person name="Goldstein S."/>
            <person name="Grafham D.V."/>
            <person name="Grocock R."/>
            <person name="Hafez N."/>
            <person name="Hagopian D.S."/>
            <person name="Hart E."/>
            <person name="Norman C.H."/>
            <person name="Humphray S."/>
            <person name="Jaffe D.B."/>
            <person name="Jones M."/>
            <person name="Kamal M."/>
            <person name="Khodiyar V.K."/>
            <person name="LaButti K."/>
            <person name="Laird G."/>
            <person name="Lehoczky J."/>
            <person name="Liu X."/>
            <person name="Lokyitsang T."/>
            <person name="Loveland J."/>
            <person name="Lui A."/>
            <person name="Macdonald P."/>
            <person name="Major J.E."/>
            <person name="Matthews L."/>
            <person name="Mauceli E."/>
            <person name="McCarroll S.A."/>
            <person name="Mihalev A.H."/>
            <person name="Mudge J."/>
            <person name="Nguyen C."/>
            <person name="Nicol R."/>
            <person name="O'Leary S.B."/>
            <person name="Osoegawa K."/>
            <person name="Schwartz D.C."/>
            <person name="Shaw-Smith C."/>
            <person name="Stankiewicz P."/>
            <person name="Steward C."/>
            <person name="Swarbreck D."/>
            <person name="Venkataraman V."/>
            <person name="Whittaker C.A."/>
            <person name="Yang X."/>
            <person name="Zimmer A.R."/>
            <person name="Bradley A."/>
            <person name="Hubbard T."/>
            <person name="Birren B.W."/>
            <person name="Rogers J."/>
            <person name="Lander E.S."/>
            <person name="Nusbaum C."/>
        </authorList>
    </citation>
    <scope>NUCLEOTIDE SEQUENCE [LARGE SCALE GENOMIC DNA]</scope>
</reference>
<reference key="5">
    <citation type="journal article" date="2004" name="Genome Res.">
        <title>The status, quality, and expansion of the NIH full-length cDNA project: the Mammalian Gene Collection (MGC).</title>
        <authorList>
            <consortium name="The MGC Project Team"/>
        </authorList>
    </citation>
    <scope>NUCLEOTIDE SEQUENCE [LARGE SCALE MRNA] (ISOFORM 1)</scope>
    <scope>VARIANT LEU-1010</scope>
    <source>
        <tissue>Leukocyte</tissue>
        <tissue>PNS</tissue>
    </source>
</reference>
<reference key="6">
    <citation type="journal article" date="2001" name="Mamm. Genome">
        <title>A genomic sequence analysis of the mouse and human microtubule-associated protein tau.</title>
        <authorList>
            <person name="Poorkaj P."/>
            <person name="Kas A."/>
            <person name="D'Souza I."/>
            <person name="Zhou Y."/>
            <person name="Pham Q."/>
            <person name="Stone M."/>
            <person name="Olson M.V."/>
            <person name="Schellenberg G.D."/>
        </authorList>
    </citation>
    <scope>TISSUE SPECIFICITY</scope>
</reference>
<reference key="7">
    <citation type="journal article" date="2005" name="Cell">
        <title>Physical association and coordinate function of the H3 K4 methyltransferase MLL1 and the H4 K16 acetyltransferase MOF.</title>
        <authorList>
            <person name="Dou Y."/>
            <person name="Milne T.A."/>
            <person name="Tackett A.J."/>
            <person name="Smith E.R."/>
            <person name="Fukuda A."/>
            <person name="Wysocka J."/>
            <person name="Allis C.D."/>
            <person name="Chait B.T."/>
            <person name="Hess J.L."/>
            <person name="Roeder R.G."/>
        </authorList>
    </citation>
    <scope>IDENTIFICATION IN THE MLL1/MLL COMPLEX</scope>
</reference>
<reference key="8">
    <citation type="journal article" date="2005" name="Mol. Cell. Biol.">
        <title>A human protein complex homologous to the Drosophila MSL complex is responsible for the majority of histone H4 acetylation at lysine 16.</title>
        <authorList>
            <person name="Smith E.R."/>
            <person name="Cayrou C."/>
            <person name="Huang R."/>
            <person name="Lane W.S."/>
            <person name="Cote J."/>
            <person name="Lucchesi J.C."/>
        </authorList>
    </citation>
    <scope>IDENTIFICATION IN A MULTIPROTEIN COMPLEX</scope>
</reference>
<reference key="9">
    <citation type="journal article" date="2006" name="Cell">
        <title>Global, in vivo, and site-specific phosphorylation dynamics in signaling networks.</title>
        <authorList>
            <person name="Olsen J.V."/>
            <person name="Blagoev B."/>
            <person name="Gnad F."/>
            <person name="Macek B."/>
            <person name="Kumar C."/>
            <person name="Mortensen P."/>
            <person name="Mann M."/>
        </authorList>
    </citation>
    <scope>IDENTIFICATION BY MASS SPECTROMETRY [LARGE SCALE ANALYSIS]</scope>
    <source>
        <tissue>Cervix carcinoma</tissue>
    </source>
</reference>
<reference key="10">
    <citation type="journal article" date="2006" name="Mol. Cell">
        <title>Nuclear pore components are involved in the transcriptional regulation of dosage compensation in Drosophila.</title>
        <authorList>
            <person name="Mendjan S."/>
            <person name="Taipale M."/>
            <person name="Kind J."/>
            <person name="Holz H."/>
            <person name="Gebhardt P."/>
            <person name="Schelder M."/>
            <person name="Vermeulen M."/>
            <person name="Buscaino A."/>
            <person name="Duncan K."/>
            <person name="Mueller J."/>
            <person name="Wilm M."/>
            <person name="Stunnenberg H.G."/>
            <person name="Saumweber H."/>
            <person name="Akhtar A."/>
        </authorList>
    </citation>
    <scope>IDENTIFICATION IN THE NSL COMPLEX</scope>
    <scope>INTERACTION WITH KAT8</scope>
</reference>
<reference key="11">
    <citation type="journal article" date="2008" name="J. Proteome Res.">
        <title>Combining protein-based IMAC, peptide-based IMAC, and MudPIT for efficient phosphoproteomic analysis.</title>
        <authorList>
            <person name="Cantin G.T."/>
            <person name="Yi W."/>
            <person name="Lu B."/>
            <person name="Park S.K."/>
            <person name="Xu T."/>
            <person name="Lee J.-D."/>
            <person name="Yates J.R. III"/>
        </authorList>
    </citation>
    <scope>PHOSPHORYLATION [LARGE SCALE ANALYSIS] AT SER-268; SER-991 AND THR-1003</scope>
    <scope>IDENTIFICATION BY MASS SPECTROMETRY [LARGE SCALE ANALYSIS]</scope>
    <source>
        <tissue>Cervix carcinoma</tissue>
    </source>
</reference>
<reference key="12">
    <citation type="journal article" date="2008" name="Proc. Natl. Acad. Sci. U.S.A.">
        <title>A quantitative atlas of mitotic phosphorylation.</title>
        <authorList>
            <person name="Dephoure N."/>
            <person name="Zhou C."/>
            <person name="Villen J."/>
            <person name="Beausoleil S.A."/>
            <person name="Bakalarski C.E."/>
            <person name="Elledge S.J."/>
            <person name="Gygi S.P."/>
        </authorList>
    </citation>
    <scope>PHOSPHORYLATION [LARGE SCALE ANALYSIS] AT SER-249; SER-268 AND SER-1045</scope>
    <scope>IDENTIFICATION BY MASS SPECTROMETRY [LARGE SCALE ANALYSIS]</scope>
    <source>
        <tissue>Cervix carcinoma</tissue>
    </source>
</reference>
<reference key="13">
    <citation type="journal article" date="2009" name="Sci. Signal.">
        <title>Quantitative phosphoproteomic analysis of T cell receptor signaling reveals system-wide modulation of protein-protein interactions.</title>
        <authorList>
            <person name="Mayya V."/>
            <person name="Lundgren D.H."/>
            <person name="Hwang S.-I."/>
            <person name="Rezaul K."/>
            <person name="Wu L."/>
            <person name="Eng J.K."/>
            <person name="Rodionov V."/>
            <person name="Han D.K."/>
        </authorList>
    </citation>
    <scope>PHOSPHORYLATION [LARGE SCALE ANALYSIS] AT SER-268</scope>
    <scope>IDENTIFICATION BY MASS SPECTROMETRY [LARGE SCALE ANALYSIS]</scope>
    <source>
        <tissue>Leukemic T-cell</tissue>
    </source>
</reference>
<reference key="14">
    <citation type="journal article" date="2009" name="Science">
        <title>Lysine acetylation targets protein complexes and co-regulates major cellular functions.</title>
        <authorList>
            <person name="Choudhary C."/>
            <person name="Kumar C."/>
            <person name="Gnad F."/>
            <person name="Nielsen M.L."/>
            <person name="Rehman M."/>
            <person name="Walther T.C."/>
            <person name="Olsen J.V."/>
            <person name="Mann M."/>
        </authorList>
    </citation>
    <scope>ACETYLATION [LARGE SCALE ANALYSIS] AT LYS-104</scope>
    <scope>IDENTIFICATION BY MASS SPECTROMETRY [LARGE SCALE ANALYSIS]</scope>
</reference>
<reference key="15">
    <citation type="journal article" date="2010" name="Cell">
        <title>The protein composition of mitotic chromosomes determined using multiclassifier combinatorial proteomics.</title>
        <authorList>
            <person name="Ohta S."/>
            <person name="Bukowski-Wills J.C."/>
            <person name="Sanchez-Pulido L."/>
            <person name="Alves Fde L."/>
            <person name="Wood L."/>
            <person name="Chen Z.A."/>
            <person name="Platani M."/>
            <person name="Fischer L."/>
            <person name="Hudson D.F."/>
            <person name="Ponting C.P."/>
            <person name="Fukagawa T."/>
            <person name="Earnshaw W.C."/>
            <person name="Rappsilber J."/>
        </authorList>
    </citation>
    <scope>SUBCELLULAR LOCATION</scope>
</reference>
<reference key="16">
    <citation type="journal article" date="2010" name="J. Biol. Chem.">
        <title>Subunit composition and substrate specificity of a MOF-containing histone acetyltransferase distinct from the male-specific lethal (MSL) complex.</title>
        <authorList>
            <person name="Cai Y."/>
            <person name="Jin J."/>
            <person name="Swanson S.K."/>
            <person name="Cole M.D."/>
            <person name="Choi S.H."/>
            <person name="Florens L."/>
            <person name="Washburn M.P."/>
            <person name="Conaway J.W."/>
            <person name="Conaway R.C."/>
        </authorList>
    </citation>
    <scope>FUNCTION IN HISTONE H4 ACETYLATION</scope>
    <scope>IDENTIFICATION IN NSL COMPLEX</scope>
    <scope>SUBCELLULAR LOCATION</scope>
</reference>
<reference key="17">
    <citation type="journal article" date="2010" name="Mol. Cell">
        <title>The nonspecific lethal complex is a transcriptional regulator in Drosophila.</title>
        <authorList>
            <person name="Raja S.J."/>
            <person name="Charapitsa I."/>
            <person name="Conrad T."/>
            <person name="Vaquerizas J.M."/>
            <person name="Gebhardt P."/>
            <person name="Holz H."/>
            <person name="Kadlec J."/>
            <person name="Fraterman S."/>
            <person name="Luscombe N.M."/>
            <person name="Akhtar A."/>
        </authorList>
    </citation>
    <scope>INTERACTION WITH KAT8</scope>
</reference>
<reference key="18">
    <citation type="journal article" date="2010" name="Sci. Signal.">
        <title>Quantitative phosphoproteomics reveals widespread full phosphorylation site occupancy during mitosis.</title>
        <authorList>
            <person name="Olsen J.V."/>
            <person name="Vermeulen M."/>
            <person name="Santamaria A."/>
            <person name="Kumar C."/>
            <person name="Miller M.L."/>
            <person name="Jensen L.J."/>
            <person name="Gnad F."/>
            <person name="Cox J."/>
            <person name="Jensen T.S."/>
            <person name="Nigg E.A."/>
            <person name="Brunak S."/>
            <person name="Mann M."/>
        </authorList>
    </citation>
    <scope>PHOSPHORYLATION [LARGE SCALE ANALYSIS] AT SER-268; SER-991 AND THR-1003</scope>
    <scope>IDENTIFICATION BY MASS SPECTROMETRY [LARGE SCALE ANALYSIS]</scope>
    <source>
        <tissue>Cervix carcinoma</tissue>
    </source>
</reference>
<reference key="19">
    <citation type="journal article" date="2011" name="Nat. Struct. Mol. Biol.">
        <title>Structural basis for MOF and MSL3 recruitment into the dosage compensation complex by MSL1.</title>
        <authorList>
            <person name="Kadlec J."/>
            <person name="Hallacli E."/>
            <person name="Lipp M."/>
            <person name="Holz H."/>
            <person name="Sanchez-Weatherby J."/>
            <person name="Cusack S."/>
            <person name="Akhtar A."/>
        </authorList>
    </citation>
    <scope>INTERACTION WITH KAT8</scope>
    <scope>MUTAGENESIS OF GLU-910; PHE-917 AND HIS-921</scope>
</reference>
<reference key="20">
    <citation type="journal article" date="2012" name="Cell Res.">
        <title>Structural insight into the regulation of MOF in the male-specific lethal complex and the non-specific lethal complex.</title>
        <authorList>
            <person name="Huang J."/>
            <person name="Wan B."/>
            <person name="Wu L."/>
            <person name="Yang Y."/>
            <person name="Dou Y."/>
            <person name="Lei M."/>
        </authorList>
    </citation>
    <scope>FUNCTION IN NSL COMPLEX</scope>
    <scope>INTERACTION WITH KAT8</scope>
    <scope>MUTAGENESIS OF 852-ARG--ARG-855; 856-GLY--SER-859; 860-PHE--ASN-863; 864-ASN--ILE-867 AND 868-PRO--VAL-871</scope>
</reference>
<reference key="21">
    <citation type="journal article" date="2012" name="Nat. Genet.">
        <title>Mutations in KANSL1 cause the 17q21.31 microdeletion syndrome phenotype.</title>
        <authorList>
            <person name="Zollino M."/>
            <person name="Orteschi D."/>
            <person name="Murdolo M."/>
            <person name="Lattante S."/>
            <person name="Battaglia D."/>
            <person name="Stefanini C."/>
            <person name="Mercuri E."/>
            <person name="Chiurazzi P."/>
            <person name="Neri G."/>
            <person name="Marangi G."/>
        </authorList>
    </citation>
    <scope>INVOLVEMENT IN KDVS</scope>
    <scope>VARIANT KDVS 606-ARG--ARG-1105 DEL</scope>
</reference>
<reference key="22">
    <citation type="journal article" date="2012" name="Nat. Genet.">
        <title>Mutations in the chromatin modifier gene KANSL1 cause the 17q21.31 microdeletion syndrome.</title>
        <authorList>
            <person name="Koolen D.A."/>
            <person name="Kramer J.M."/>
            <person name="Neveling K."/>
            <person name="Nillesen W.M."/>
            <person name="Moore-Barton H.L."/>
            <person name="Elmslie F.V."/>
            <person name="Toutain A."/>
            <person name="Amiel J."/>
            <person name="Malan V."/>
            <person name="Tsai A.C."/>
            <person name="Cheung S.W."/>
            <person name="Gilissen C."/>
            <person name="Verwiel E.T."/>
            <person name="Martens S."/>
            <person name="Feuth T."/>
            <person name="Bongers E.M."/>
            <person name="de Vries P."/>
            <person name="Scheffer H."/>
            <person name="Vissers L.E."/>
            <person name="de Brouwer A.P."/>
            <person name="Brunner H.G."/>
            <person name="Veltman J.A."/>
            <person name="Schenck A."/>
            <person name="Yntema H.G."/>
            <person name="de Vries B.B."/>
        </authorList>
    </citation>
    <scope>INVOLVEMENT IN KDVS</scope>
    <scope>VARIANT KDVS 306-GLN--ARG-1105 DEL</scope>
</reference>
<reference key="23">
    <citation type="journal article" date="2013" name="J. Proteome Res.">
        <title>Toward a comprehensive characterization of a human cancer cell phosphoproteome.</title>
        <authorList>
            <person name="Zhou H."/>
            <person name="Di Palma S."/>
            <person name="Preisinger C."/>
            <person name="Peng M."/>
            <person name="Polat A.N."/>
            <person name="Heck A.J."/>
            <person name="Mohammed S."/>
        </authorList>
    </citation>
    <scope>PHOSPHORYLATION [LARGE SCALE ANALYSIS] AT SER-249; SER-268; SER-991; SER-994 AND SER-1045</scope>
    <scope>IDENTIFICATION BY MASS SPECTROMETRY [LARGE SCALE ANALYSIS]</scope>
    <source>
        <tissue>Cervix carcinoma</tissue>
        <tissue>Erythroleukemia</tissue>
    </source>
</reference>
<reference key="24">
    <citation type="journal article" date="2014" name="J. Proteomics">
        <title>An enzyme assisted RP-RPLC approach for in-depth analysis of human liver phosphoproteome.</title>
        <authorList>
            <person name="Bian Y."/>
            <person name="Song C."/>
            <person name="Cheng K."/>
            <person name="Dong M."/>
            <person name="Wang F."/>
            <person name="Huang J."/>
            <person name="Sun D."/>
            <person name="Wang L."/>
            <person name="Ye M."/>
            <person name="Zou H."/>
        </authorList>
    </citation>
    <scope>PHOSPHORYLATION [LARGE SCALE ANALYSIS] AT SER-249</scope>
    <scope>IDENTIFICATION BY MASS SPECTROMETRY [LARGE SCALE ANALYSIS]</scope>
    <source>
        <tissue>Liver</tissue>
    </source>
</reference>
<reference key="25">
    <citation type="journal article" date="2017" name="Nat. Struct. Mol. Biol.">
        <title>Site-specific mapping of the human SUMO proteome reveals co-modification with phosphorylation.</title>
        <authorList>
            <person name="Hendriks I.A."/>
            <person name="Lyon D."/>
            <person name="Young C."/>
            <person name="Jensen L.J."/>
            <person name="Vertegaal A.C."/>
            <person name="Nielsen M.L."/>
        </authorList>
    </citation>
    <scope>SUMOYLATION [LARGE SCALE ANALYSIS] AT LYS-262 AND LYS-331</scope>
    <scope>IDENTIFICATION BY MASS SPECTROMETRY [LARGE SCALE ANALYSIS]</scope>
</reference>
<reference key="26">
    <citation type="journal article" date="2015" name="J. Med. Genet.">
        <title>Intragenic KANSL1 mutations and chromosome 17q21.31 deletions: broadening the clinical spectrum and genotype-phenotype correlations in a large cohort of patients.</title>
        <authorList>
            <person name="Zollino M."/>
            <person name="Marangi G."/>
            <person name="Ponzi E."/>
            <person name="Orteschi D."/>
            <person name="Ricciardi S."/>
            <person name="Lattante S."/>
            <person name="Murdolo M."/>
            <person name="Battaglia D."/>
            <person name="Contaldo I."/>
            <person name="Mercuri E."/>
            <person name="Stefanini M.C."/>
            <person name="Caumes R."/>
            <person name="Edery P."/>
            <person name="Rossi M."/>
            <person name="Piccione M."/>
            <person name="Corsello G."/>
            <person name="Della Monica M."/>
            <person name="Scarano F."/>
            <person name="Priolo M."/>
            <person name="Gentile M."/>
            <person name="Zampino G."/>
            <person name="Vijzelaar R."/>
            <person name="Abdulrahman O."/>
            <person name="Rauch A."/>
            <person name="Oneda B."/>
            <person name="Deardorff M.A."/>
            <person name="Saitta S.C."/>
            <person name="Falk M.J."/>
            <person name="Dubbs H."/>
            <person name="Zackai E."/>
        </authorList>
    </citation>
    <scope>INVOLVEMENT IN KDVS</scope>
    <scope>VARIANT KDVS 348-ARG--ARG-1105 DEL</scope>
</reference>
<reference key="27">
    <citation type="journal article" date="2015" name="Nat. Commun.">
        <title>An epigenetic regulator emerges as microtubule minus-end binding and stabilizing factor in mitosis.</title>
        <authorList>
            <person name="Meunier S."/>
            <person name="Shvedunova M."/>
            <person name="Van Nguyen N."/>
            <person name="Avila L."/>
            <person name="Vernos I."/>
            <person name="Akhtar A."/>
        </authorList>
    </citation>
    <scope>FUNCTION</scope>
    <scope>SUBCELLULAR LOCATION</scope>
    <scope>DEVELOPMENTAL STAGE</scope>
</reference>
<reference key="28">
    <citation type="journal article" date="2016" name="Cell">
        <title>MOF acetyl transferase regulates transcription and respiration in mitochondria.</title>
        <authorList>
            <person name="Chatterjee A."/>
            <person name="Seyfferth J."/>
            <person name="Lucci J."/>
            <person name="Gilsbach R."/>
            <person name="Preissl S."/>
            <person name="Boettinger L."/>
            <person name="Maartensson C.U."/>
            <person name="Panhale A."/>
            <person name="Stehle T."/>
            <person name="Kretz O."/>
            <person name="Sahyoun A.H."/>
            <person name="Avilov S."/>
            <person name="Eimer S."/>
            <person name="Hein L."/>
            <person name="Pfanner N."/>
            <person name="Becker T."/>
            <person name="Akhtar A."/>
        </authorList>
    </citation>
    <scope>FUNCTION</scope>
    <scope>SUBCELLULAR LOCATION</scope>
    <scope>IDENTIFICATION IN NSL COMPLEX</scope>
</reference>
<reference key="29">
    <citation type="journal article" date="2021" name="Mol. Cell">
        <title>Complex-dependent histone acetyltransferase activity of KAT8 determines its role in transcription and cellular homeostasis.</title>
        <authorList>
            <person name="Radzisheuskaya A."/>
            <person name="Shliaha P.V."/>
            <person name="Grinev V.V."/>
            <person name="Shlyueva D."/>
            <person name="Damhofer H."/>
            <person name="Koche R."/>
            <person name="Gorshkov V."/>
            <person name="Kovalchuk S."/>
            <person name="Zhan Y."/>
            <person name="Rodriguez K.L."/>
            <person name="Johnstone A.L."/>
            <person name="Keogh M.C."/>
            <person name="Hendrickson R.C."/>
            <person name="Jensen O.N."/>
            <person name="Helin K."/>
        </authorList>
    </citation>
    <scope>FUNCTION</scope>
    <scope>IDENTIFICATION IN NSL COMPLEX</scope>
</reference>
<evidence type="ECO:0000255" key="1"/>
<evidence type="ECO:0000255" key="2">
    <source>
        <dbReference type="PROSITE-ProRule" id="PRU01397"/>
    </source>
</evidence>
<evidence type="ECO:0000256" key="3">
    <source>
        <dbReference type="SAM" id="MobiDB-lite"/>
    </source>
</evidence>
<evidence type="ECO:0000269" key="4">
    <source>
    </source>
</evidence>
<evidence type="ECO:0000269" key="5">
    <source>
    </source>
</evidence>
<evidence type="ECO:0000269" key="6">
    <source>
    </source>
</evidence>
<evidence type="ECO:0000269" key="7">
    <source>
    </source>
</evidence>
<evidence type="ECO:0000269" key="8">
    <source>
    </source>
</evidence>
<evidence type="ECO:0000269" key="9">
    <source>
    </source>
</evidence>
<evidence type="ECO:0000269" key="10">
    <source>
    </source>
</evidence>
<evidence type="ECO:0000269" key="11">
    <source>
    </source>
</evidence>
<evidence type="ECO:0000269" key="12">
    <source>
    </source>
</evidence>
<evidence type="ECO:0000269" key="13">
    <source>
    </source>
</evidence>
<evidence type="ECO:0000269" key="14">
    <source>
    </source>
</evidence>
<evidence type="ECO:0000269" key="15">
    <source>
    </source>
</evidence>
<evidence type="ECO:0000269" key="16">
    <source>
    </source>
</evidence>
<evidence type="ECO:0000269" key="17">
    <source>
    </source>
</evidence>
<evidence type="ECO:0000269" key="18">
    <source>
    </source>
</evidence>
<evidence type="ECO:0000269" key="19">
    <source>
    </source>
</evidence>
<evidence type="ECO:0000269" key="20">
    <source>
    </source>
</evidence>
<evidence type="ECO:0000269" key="21">
    <source>
    </source>
</evidence>
<evidence type="ECO:0000269" key="22">
    <source>
    </source>
</evidence>
<evidence type="ECO:0000303" key="23">
    <source>
    </source>
</evidence>
<evidence type="ECO:0000305" key="24"/>
<evidence type="ECO:0007744" key="25">
    <source>
    </source>
</evidence>
<evidence type="ECO:0007744" key="26">
    <source>
    </source>
</evidence>
<evidence type="ECO:0007744" key="27">
    <source>
    </source>
</evidence>
<evidence type="ECO:0007744" key="28">
    <source>
    </source>
</evidence>
<evidence type="ECO:0007744" key="29">
    <source>
    </source>
</evidence>
<evidence type="ECO:0007744" key="30">
    <source>
    </source>
</evidence>
<evidence type="ECO:0007744" key="31">
    <source>
    </source>
</evidence>
<evidence type="ECO:0007744" key="32">
    <source>
    </source>
</evidence>
<evidence type="ECO:0007829" key="33">
    <source>
        <dbReference type="PDB" id="4CY1"/>
    </source>
</evidence>
<sequence>MAAMAPALTDAAAEAHHIRFKLAPPSSTLSPGSAENNGNANILIAANGTKRKAIAAEDPSLDFRNNPTKEDLGKLQPLVASYLCSDVTSVPSKESLKLQGVFSKQTVLKSHPLLSQSYELRAELLGRQPVLEFSLENLRTMNTSGQTALPQAPVNGLAKKLTKSSTHSDHDNSTSLNGGKRALTSSALHGGEMGGSESGDLKGGMTNCTLPHRSLDVEHTTLYSNNSTANKSSVNSMEQPALQGSSRLSPGTDSSSNLGGVKLEGKKSPLSSILFSALDSDTRITALLRRQADIESRARRLQKRLQVVQAKQVERHIQHQLGGFLEKTLSKLPNLESLRPRSQLMLTRKAEAALRKAASETTTSEGLSNFLKSNSISEELERFTASGIANLRCSEQAFDSDVTDSSSGGESDIEEEELTRADPEQRHVPLRRRSEWKWAADRAAIVSRWNWLQAHVSDLEYRIRQQTDIYKQIRANKGLIVLGEVPPPEHTTDLFLPLSSEVKTDHGTDKLIESVSQPLENHGAPIIGHISESLSTKSCGALRPVNGVINTLQPVLADHIPGDSSDAEEQLHKKQRLNLVSSSSDGTCVAARTRPVLSCKKRRLVRPNSIVPLSKKVHRNSTIRPGCDVNPSCALCGSGSINTMPPEIHYEAPLLERLSQLDSCVHPVLAFPDDVPTSLHFQSMLKSQWQNKPFDKIKPPKKLSLKHRAPMPGSLPDSARKDRHKLVSSFLTTAKLSHHQTRPDRTHRQHLDDVGAVPMVERVTAPKAERLLNPPPPVHDPNHSKMRLRDHSSERSEVLKHHTDMSSSSYLAATHHPPHSPLVRQLSTSSDSPAPASSSSQVTASTSQQPVRRRRGESSFDINNIVIPMSVAATTRVEKLQYKEILTPSWREVDLQSLKGSPDEENEEIEDLSDAAFAALHAKCEEMERARWLWTTSVPPQRRGSRSYRSSDGRTTPQLGSANPSTPQPASPDVSSSHSLSEYSHGQSPRSPISPELHSAPLTPVARDTPRHLASEDTRCSTPELGLDEQSVQPWERRTFPLAHSPQAECEDQLDAQERAARCTRRTSGSKTGRETEAAPTSPPIVPLKSRHLVAAATAQRPTHR</sequence>
<comment type="function">
    <text evidence="12 18 19 21 22">Non-catalytic component of the NSL histone acetyltransferase complex, a multiprotein complex that mediates histone H4 acetylation at 'Lys-5'- and 'Lys-8' (H4K5ac and H4K8ac) at transcription start sites and promotes transcription initiation (PubMed:20018852, PubMed:22547026, PubMed:33657400). The NSL complex also acts as a regulator of gene expression in mitochondria (PubMed:27768893). In addition to its role in transcription, KANSL1 also plays an essential role in spindle assembly during mitosis (PubMed:26243146). Associates with microtubule ends and contributes to microtubule stability (PubMed:26243146).</text>
</comment>
<comment type="subunit">
    <text evidence="2 8 9 10 12 13 15 18 21 22">Component of the NSL complex at least composed of MOF/KAT8, KANSL1, KANSL2, KANSL3, MCRS1, PHF20, OGT1/OGT, WDR5 and HCFC1. Interacts (via PEHE domain) with KAT8 (via HAT domain); the interaction is direct (PubMed:16227571, PubMed:16543150, PubMed:20018852, PubMed:20620954, PubMed:21217699, PubMed:22547026, PubMed:27768893, PubMed:33657400). Component of some MLL1/MLL complex, at least composed of the core components KMT2A/MLL1, ASH2L, HCFC1, WDR5 and RBBP5, as well as the facultative components BACC1, CHD8, E2F6, HSP70, INO80C, KANSL1, LAS1L, MAX, MCRS1, MGA, KAT8/MOF, PELP1, PHF20, PRP31, RING2, RUVB1/TIP49A, RUVB2/TIP49B, SENP3, TAF1, TAF4, TAF6, TAF7, TAF9 and TEX10 (PubMed:15960975).</text>
</comment>
<comment type="interaction">
    <interactant intactId="EBI-740244">
        <id>Q7Z3B3</id>
    </interactant>
    <interactant intactId="EBI-739580">
        <id>Q13137</id>
        <label>CALCOCO2</label>
    </interactant>
    <organismsDiffer>false</organismsDiffer>
    <experiments>5</experiments>
</comment>
<comment type="interaction">
    <interactant intactId="EBI-740244">
        <id>Q7Z3B3</id>
    </interactant>
    <interactant intactId="EBI-10171416">
        <id>Q96JN2-2</id>
        <label>CCDC136</label>
    </interactant>
    <organismsDiffer>false</organismsDiffer>
    <experiments>3</experiments>
</comment>
<comment type="interaction">
    <interactant intactId="EBI-740244">
        <id>Q7Z3B3</id>
    </interactant>
    <interactant intactId="EBI-739674">
        <id>Q15834</id>
        <label>CCDC85B</label>
    </interactant>
    <organismsDiffer>false</organismsDiffer>
    <experiments>2</experiments>
</comment>
<comment type="interaction">
    <interactant intactId="EBI-740244">
        <id>Q7Z3B3</id>
    </interactant>
    <interactant intactId="EBI-374880">
        <id>Q99459</id>
        <label>CDC5L</label>
    </interactant>
    <organismsDiffer>false</organismsDiffer>
    <experiments>3</experiments>
</comment>
<comment type="interaction">
    <interactant intactId="EBI-740244">
        <id>Q7Z3B3</id>
    </interactant>
    <interactant intactId="EBI-1181367">
        <id>Q01850</id>
        <label>CDR2</label>
    </interactant>
    <organismsDiffer>false</organismsDiffer>
    <experiments>4</experiments>
</comment>
<comment type="interaction">
    <interactant intactId="EBI-740244">
        <id>Q7Z3B3</id>
    </interactant>
    <interactant intactId="EBI-739624">
        <id>Q8NHQ1</id>
        <label>CEP70</label>
    </interactant>
    <organismsDiffer>false</organismsDiffer>
    <experiments>4</experiments>
</comment>
<comment type="interaction">
    <interactant intactId="EBI-740244">
        <id>Q7Z3B3</id>
    </interactant>
    <interactant intactId="EBI-465804">
        <id>Q96EV8</id>
        <label>DTNBP1</label>
    </interactant>
    <organismsDiffer>false</organismsDiffer>
    <experiments>3</experiments>
</comment>
<comment type="interaction">
    <interactant intactId="EBI-740244">
        <id>Q7Z3B3</id>
    </interactant>
    <interactant intactId="EBI-5661036">
        <id>A1L4K1</id>
        <label>FSD2</label>
    </interactant>
    <organismsDiffer>false</organismsDiffer>
    <experiments>3</experiments>
</comment>
<comment type="interaction">
    <interactant intactId="EBI-740244">
        <id>Q7Z3B3</id>
    </interactant>
    <interactant intactId="EBI-618309">
        <id>Q08379</id>
        <label>GOLGA2</label>
    </interactant>
    <organismsDiffer>false</organismsDiffer>
    <experiments>4</experiments>
</comment>
<comment type="interaction">
    <interactant intactId="EBI-740244">
        <id>Q7Z3B3</id>
    </interactant>
    <interactant intactId="EBI-743290">
        <id>Q96ED9</id>
        <label>HOOK2</label>
    </interactant>
    <organismsDiffer>false</organismsDiffer>
    <experiments>4</experiments>
</comment>
<comment type="interaction">
    <interactant intactId="EBI-740244">
        <id>Q7Z3B3</id>
    </interactant>
    <interactant intactId="EBI-2125614">
        <id>Q9BVG8</id>
        <label>KIFC3</label>
    </interactant>
    <organismsDiffer>false</organismsDiffer>
    <experiments>4</experiments>
</comment>
<comment type="interaction">
    <interactant intactId="EBI-740244">
        <id>Q7Z3B3</id>
    </interactant>
    <interactant intactId="EBI-739566">
        <id>P19012</id>
        <label>KRT15</label>
    </interactant>
    <organismsDiffer>false</organismsDiffer>
    <experiments>5</experiments>
</comment>
<comment type="interaction">
    <interactant intactId="EBI-740244">
        <id>Q7Z3B3</id>
    </interactant>
    <interactant intactId="EBI-749530">
        <id>P43365</id>
        <label>MAGEA12</label>
    </interactant>
    <organismsDiffer>false</organismsDiffer>
    <experiments>3</experiments>
</comment>
<comment type="interaction">
    <interactant intactId="EBI-740244">
        <id>Q7Z3B3</id>
    </interactant>
    <interactant intactId="EBI-10172876">
        <id>Q7Z6G3-2</id>
        <label>NECAB2</label>
    </interactant>
    <organismsDiffer>false</organismsDiffer>
    <experiments>3</experiments>
</comment>
<comment type="interaction">
    <interactant intactId="EBI-740244">
        <id>Q7Z3B3</id>
    </interactant>
    <interactant intactId="EBI-347978">
        <id>P37198</id>
        <label>NUP62</label>
    </interactant>
    <organismsDiffer>false</organismsDiffer>
    <experiments>4</experiments>
</comment>
<comment type="interaction">
    <interactant intactId="EBI-740244">
        <id>Q7Z3B3</id>
    </interactant>
    <interactant intactId="EBI-10178410">
        <id>Q86Y26</id>
        <label>NUTM1</label>
    </interactant>
    <organismsDiffer>false</organismsDiffer>
    <experiments>3</experiments>
</comment>
<comment type="interaction">
    <interactant intactId="EBI-740244">
        <id>Q7Z3B3</id>
    </interactant>
    <interactant intactId="EBI-302345">
        <id>Q8ND90</id>
        <label>PNMA1</label>
    </interactant>
    <organismsDiffer>false</organismsDiffer>
    <experiments>3</experiments>
</comment>
<comment type="interaction">
    <interactant intactId="EBI-740244">
        <id>Q7Z3B3</id>
    </interactant>
    <interactant intactId="EBI-413317">
        <id>Q96R06</id>
        <label>SPAG5</label>
    </interactant>
    <organismsDiffer>false</organismsDiffer>
    <experiments>3</experiments>
</comment>
<comment type="interaction">
    <interactant intactId="EBI-740244">
        <id>Q7Z3B3</id>
    </interactant>
    <interactant intactId="EBI-1105213">
        <id>Q9UBB9</id>
        <label>TFIP11</label>
    </interactant>
    <organismsDiffer>false</organismsDiffer>
    <experiments>5</experiments>
</comment>
<comment type="interaction">
    <interactant intactId="EBI-740244">
        <id>Q7Z3B3</id>
    </interactant>
    <interactant intactId="EBI-3650647">
        <id>Q9BUZ4</id>
        <label>TRAF4</label>
    </interactant>
    <organismsDiffer>false</organismsDiffer>
    <experiments>3</experiments>
</comment>
<comment type="interaction">
    <interactant intactId="EBI-740244">
        <id>Q7Z3B3</id>
    </interactant>
    <interactant intactId="EBI-719493">
        <id>P14373</id>
        <label>TRIM27</label>
    </interactant>
    <organismsDiffer>false</organismsDiffer>
    <experiments>4</experiments>
</comment>
<comment type="interaction">
    <interactant intactId="EBI-740244">
        <id>Q7Z3B3</id>
    </interactant>
    <interactant intactId="EBI-540834">
        <id>P61964</id>
        <label>WDR5</label>
    </interactant>
    <organismsDiffer>false</organismsDiffer>
    <experiments>14</experiments>
</comment>
<comment type="subcellular location">
    <subcellularLocation>
        <location evidence="12 19">Nucleus</location>
    </subcellularLocation>
    <subcellularLocation>
        <location evidence="14">Chromosome</location>
        <location evidence="14">Centromere</location>
        <location evidence="14">Kinetochore</location>
    </subcellularLocation>
    <subcellularLocation>
        <location evidence="21">Mitochondrion</location>
    </subcellularLocation>
    <subcellularLocation>
        <location evidence="19">Cytoplasm</location>
        <location evidence="19">Cytoskeleton</location>
        <location evidence="19">Spindle pole</location>
    </subcellularLocation>
    <text evidence="19">Concentrated in the nucleus during interphase, localizes to the spindle poles and pericentriolar region during prometaphase and metaphase, and remains associated with the spindle poles throughout anaphase.</text>
</comment>
<comment type="alternative products">
    <event type="alternative splicing"/>
    <isoform>
        <id>Q7Z3B3-1</id>
        <name>1</name>
        <sequence type="displayed"/>
    </isoform>
    <isoform>
        <id>Q7Z3B3-2</id>
        <name>2</name>
        <sequence type="described" ref="VSP_041132 VSP_041133"/>
    </isoform>
    <isoform>
        <id>Q7Z3B3-4</id>
        <name>3</name>
        <sequence type="described" ref="VSP_041132 VSP_041133 VSP_058944"/>
    </isoform>
</comment>
<comment type="tissue specificity">
    <text evidence="5">Expressed in the brain.</text>
</comment>
<comment type="developmental stage">
    <text evidence="19">Levels remain constant throughout all cell cycle stages (at protein level).</text>
</comment>
<comment type="disease" evidence="16 17 20">
    <disease id="DI-05560">
        <name>Koolen-De Vries syndrome</name>
        <acronym>KDVS</acronym>
        <description>An autosomal dominant, multisystem disorder characterized by hypotonia, developmental delay, moderate to severe intellectual disability, and distinctive dysmorphic features including tall, broad forehead, long face, upslanting palpebral fissures, epicanthal folds, tubular nose with bulbous nasal tip, and large ears. Expressive language development is particularly impaired compared with receptive language or motor skills. Additional features include social and friendly behavior, epilepsy, musculoskeletal anomalies, congenital heart defects, urogenital malformations, and ectodermal anomalies.</description>
        <dbReference type="MIM" id="610443"/>
    </disease>
    <text>The disease is caused by variants affecting the gene represented in this entry.</text>
</comment>
<comment type="miscellaneous">
    <molecule>Isoform 2</molecule>
    <text evidence="24">May be due to an intron retention.</text>
</comment>
<comment type="sequence caution" evidence="24">
    <conflict type="erroneous initiation">
        <sequence resource="EMBL-CDS" id="CAH10565"/>
    </conflict>
    <text>Truncated N-terminus.</text>
</comment>
<feature type="chain" id="PRO_0000234565" description="KAT8 regulatory NSL complex subunit 1">
    <location>
        <begin position="1"/>
        <end position="1105"/>
    </location>
</feature>
<feature type="domain" description="PEHE" evidence="2">
    <location>
        <begin position="884"/>
        <end position="1035"/>
    </location>
</feature>
<feature type="region of interest" description="Disordered" evidence="3">
    <location>
        <begin position="145"/>
        <end position="211"/>
    </location>
</feature>
<feature type="region of interest" description="Disordered" evidence="3">
    <location>
        <begin position="225"/>
        <end position="263"/>
    </location>
</feature>
<feature type="region of interest" description="Disordered" evidence="3">
    <location>
        <begin position="399"/>
        <end position="426"/>
    </location>
</feature>
<feature type="region of interest" description="Disordered" evidence="3">
    <location>
        <begin position="733"/>
        <end position="857"/>
    </location>
</feature>
<feature type="region of interest" description="Required for activation of KAT8 histone acetyltransferase activity">
    <location>
        <begin position="850"/>
        <end position="882"/>
    </location>
</feature>
<feature type="region of interest" description="Interaction with KAT8 HAT domain" evidence="2">
    <location>
        <begin position="910"/>
        <end position="928"/>
    </location>
</feature>
<feature type="region of interest" description="Disordered" evidence="3">
    <location>
        <begin position="938"/>
        <end position="1034"/>
    </location>
</feature>
<feature type="region of interest" description="Disordered" evidence="3">
    <location>
        <begin position="1058"/>
        <end position="1105"/>
    </location>
</feature>
<feature type="coiled-coil region" evidence="1">
    <location>
        <begin position="283"/>
        <end position="314"/>
    </location>
</feature>
<feature type="compositionally biased region" description="Polar residues" evidence="3">
    <location>
        <begin position="225"/>
        <end position="258"/>
    </location>
</feature>
<feature type="compositionally biased region" description="Basic and acidic residues" evidence="3">
    <location>
        <begin position="741"/>
        <end position="753"/>
    </location>
</feature>
<feature type="compositionally biased region" description="Basic and acidic residues" evidence="3">
    <location>
        <begin position="780"/>
        <end position="804"/>
    </location>
</feature>
<feature type="compositionally biased region" description="Low complexity" evidence="3">
    <location>
        <begin position="827"/>
        <end position="850"/>
    </location>
</feature>
<feature type="compositionally biased region" description="Polar residues" evidence="3">
    <location>
        <begin position="955"/>
        <end position="965"/>
    </location>
</feature>
<feature type="compositionally biased region" description="Low complexity" evidence="3">
    <location>
        <begin position="975"/>
        <end position="988"/>
    </location>
</feature>
<feature type="compositionally biased region" description="Basic and acidic residues" evidence="3">
    <location>
        <begin position="1008"/>
        <end position="1019"/>
    </location>
</feature>
<feature type="modified residue" description="N6-acetyllysine" evidence="27">
    <location>
        <position position="104"/>
    </location>
</feature>
<feature type="modified residue" description="Phosphoserine" evidence="26 30 31">
    <location>
        <position position="249"/>
    </location>
</feature>
<feature type="modified residue" description="Phosphoserine" evidence="25 26 28 29 30">
    <location>
        <position position="268"/>
    </location>
</feature>
<feature type="modified residue" description="Phosphoserine" evidence="25 29 30">
    <location>
        <position position="991"/>
    </location>
</feature>
<feature type="modified residue" description="Phosphoserine" evidence="30">
    <location>
        <position position="994"/>
    </location>
</feature>
<feature type="modified residue" description="Phosphothreonine" evidence="25 29">
    <location>
        <position position="1003"/>
    </location>
</feature>
<feature type="modified residue" description="Phosphoserine" evidence="26 30">
    <location>
        <position position="1045"/>
    </location>
</feature>
<feature type="cross-link" description="Glycyl lysine isopeptide (Lys-Gly) (interchain with G-Cter in SUMO2)" evidence="32">
    <location>
        <position position="262"/>
    </location>
</feature>
<feature type="cross-link" description="Glycyl lysine isopeptide (Lys-Gly) (interchain with G-Cter in SUMO2)" evidence="32">
    <location>
        <position position="331"/>
    </location>
</feature>
<feature type="splice variant" id="VSP_041132" description="In isoform 2 and isoform 3." evidence="23">
    <location>
        <begin position="1"/>
        <end position="669"/>
    </location>
</feature>
<feature type="splice variant" id="VSP_041133" description="In isoform 2 and isoform 3." evidence="23">
    <original>AFPD</original>
    <variation>MFLA</variation>
    <location>
        <begin position="670"/>
        <end position="673"/>
    </location>
</feature>
<feature type="splice variant" id="VSP_058944" description="In isoform 3.">
    <original>KLSHHQTRPDRTHRQHLDDVGAVPMVERVTAPKAERLLNPPPPVHDPNHSKMRLRDHSSERSEV</original>
    <variation>M</variation>
    <location>
        <begin position="735"/>
        <end position="798"/>
    </location>
</feature>
<feature type="sequence variant" id="VAR_049515" description="In dbSNP:rs17585974.">
    <original>K</original>
    <variation>T</variation>
    <location>
        <position position="104"/>
    </location>
</feature>
<feature type="sequence variant" id="VAR_049516" description="In dbSNP:rs17662853.">
    <original>T</original>
    <variation>I</variation>
    <location>
        <position position="221"/>
    </location>
</feature>
<feature type="sequence variant" id="VAR_049517" description="In dbSNP:rs35643216.">
    <original>N</original>
    <variation>D</variation>
    <location>
        <position position="225"/>
    </location>
</feature>
<feature type="sequence variant" id="VAR_081891" description="In KDVS." evidence="16">
    <location>
        <begin position="306"/>
        <end position="1105"/>
    </location>
</feature>
<feature type="sequence variant" id="VAR_081892" description="In KDVS." evidence="20">
    <location>
        <begin position="348"/>
        <end position="1105"/>
    </location>
</feature>
<feature type="sequence variant" id="VAR_081893" description="In KDVS." evidence="17">
    <location>
        <begin position="606"/>
        <end position="1105"/>
    </location>
</feature>
<feature type="sequence variant" id="VAR_049518" description="In dbSNP:rs34043286." evidence="6">
    <original>S</original>
    <variation>P</variation>
    <location>
        <position position="718"/>
    </location>
</feature>
<feature type="sequence variant" id="VAR_026287" description="In dbSNP:rs7220988." evidence="4 6 7 11">
    <original>P</original>
    <variation>L</variation>
    <location>
        <position position="1010"/>
    </location>
</feature>
<feature type="sequence variant" id="VAR_049519" description="In dbSNP:rs34579536." evidence="6">
    <original>I</original>
    <variation>T</variation>
    <location>
        <position position="1085"/>
    </location>
</feature>
<feature type="mutagenesis site" description="Abolishes KAT8 histone acetyltransferase activity." evidence="18">
    <original>RRRR</original>
    <variation>AAAA</variation>
    <location>
        <begin position="852"/>
        <end position="855"/>
    </location>
</feature>
<feature type="mutagenesis site" description="Strongly reduces KAT8 histone acetyltransferase activity." evidence="18">
    <original>GESS</original>
    <variation>AAAA</variation>
    <location>
        <begin position="856"/>
        <end position="859"/>
    </location>
</feature>
<feature type="mutagenesis site" description="Strongly reduces KAT8 histone acetyltransferase activity." evidence="18">
    <original>FDIN</original>
    <variation>AAAA</variation>
    <location>
        <begin position="860"/>
        <end position="863"/>
    </location>
</feature>
<feature type="mutagenesis site" description="Abolishes KAT8 histone acetyltransferase activity." evidence="18">
    <original>NIVI</original>
    <variation>AAAA</variation>
    <location>
        <begin position="864"/>
        <end position="867"/>
    </location>
</feature>
<feature type="mutagenesis site" description="Reduces KAT8 histone acetyltransferase activity." evidence="18">
    <original>PMSV</original>
    <variation>AAAA</variation>
    <location>
        <begin position="868"/>
        <end position="871"/>
    </location>
</feature>
<feature type="mutagenesis site" description="Abolishes interaction with KAT8." evidence="15">
    <original>E</original>
    <variation>R</variation>
    <location>
        <position position="910"/>
    </location>
</feature>
<feature type="mutagenesis site" description="No effect on interaction with KAT8." evidence="15">
    <original>F</original>
    <variation>R</variation>
    <location>
        <position position="917"/>
    </location>
</feature>
<feature type="mutagenesis site" description="Abolishes interaction with KAT8." evidence="15">
    <original>H</original>
    <variation>R</variation>
    <location>
        <position position="921"/>
    </location>
</feature>
<feature type="sequence conflict" description="In Ref. 3; CAB70694." evidence="24" ref="3">
    <original>I</original>
    <variation>F</variation>
    <location>
        <position position="530"/>
    </location>
</feature>
<feature type="sequence conflict" description="In Ref. 3; CAH10565." evidence="24" ref="3">
    <original>S</original>
    <variation>G</variation>
    <location>
        <position position="683"/>
    </location>
</feature>
<feature type="sequence conflict" description="In Ref. 2; BAF83948 and 4; KF495991." evidence="24" ref="2 4">
    <location>
        <position position="849"/>
    </location>
</feature>
<feature type="helix" evidence="33">
    <location>
        <begin position="591"/>
        <end position="593"/>
    </location>
</feature>
<organism>
    <name type="scientific">Homo sapiens</name>
    <name type="common">Human</name>
    <dbReference type="NCBI Taxonomy" id="9606"/>
    <lineage>
        <taxon>Eukaryota</taxon>
        <taxon>Metazoa</taxon>
        <taxon>Chordata</taxon>
        <taxon>Craniata</taxon>
        <taxon>Vertebrata</taxon>
        <taxon>Euteleostomi</taxon>
        <taxon>Mammalia</taxon>
        <taxon>Eutheria</taxon>
        <taxon>Euarchontoglires</taxon>
        <taxon>Primates</taxon>
        <taxon>Haplorrhini</taxon>
        <taxon>Catarrhini</taxon>
        <taxon>Hominidae</taxon>
        <taxon>Homo</taxon>
    </lineage>
</organism>
<dbReference type="EMBL" id="AB033093">
    <property type="protein sequence ID" value="BAA86581.1"/>
    <property type="molecule type" value="mRNA"/>
</dbReference>
<dbReference type="EMBL" id="AK094946">
    <property type="protein sequence ID" value="BAG52961.1"/>
    <property type="molecule type" value="mRNA"/>
</dbReference>
<dbReference type="EMBL" id="AK291259">
    <property type="protein sequence ID" value="BAF83948.1"/>
    <property type="molecule type" value="mRNA"/>
</dbReference>
<dbReference type="EMBL" id="AL117476">
    <property type="protein sequence ID" value="CAB55949.1"/>
    <property type="molecule type" value="mRNA"/>
</dbReference>
<dbReference type="EMBL" id="AL137317">
    <property type="protein sequence ID" value="CAB70694.1"/>
    <property type="molecule type" value="mRNA"/>
</dbReference>
<dbReference type="EMBL" id="BX538006">
    <property type="protein sequence ID" value="CAD97958.1"/>
    <property type="molecule type" value="mRNA"/>
</dbReference>
<dbReference type="EMBL" id="BX648760">
    <property type="protein sequence ID" value="CAH10565.1"/>
    <property type="status" value="ALT_INIT"/>
    <property type="molecule type" value="mRNA"/>
</dbReference>
<dbReference type="EMBL" id="AC217773">
    <property type="status" value="NOT_ANNOTATED_CDS"/>
    <property type="molecule type" value="Genomic_DNA"/>
</dbReference>
<dbReference type="EMBL" id="CR936218">
    <property type="status" value="NOT_ANNOTATED_CDS"/>
    <property type="molecule type" value="Genomic_DNA"/>
</dbReference>
<dbReference type="EMBL" id="KF495991">
    <property type="status" value="NOT_ANNOTATED_CDS"/>
    <property type="molecule type" value="Genomic_DNA"/>
</dbReference>
<dbReference type="EMBL" id="BC035892">
    <property type="protein sequence ID" value="AAH35892.1"/>
    <property type="molecule type" value="mRNA"/>
</dbReference>
<dbReference type="EMBL" id="BC098376">
    <property type="protein sequence ID" value="AAH98376.1"/>
    <property type="molecule type" value="mRNA"/>
</dbReference>
<dbReference type="CCDS" id="CCDS11503.2">
    <molecule id="Q7Z3B3-1"/>
</dbReference>
<dbReference type="PIR" id="T17259">
    <property type="entry name" value="T17259"/>
</dbReference>
<dbReference type="PIR" id="T46385">
    <property type="entry name" value="T46385"/>
</dbReference>
<dbReference type="RefSeq" id="NP_001180394.1">
    <property type="nucleotide sequence ID" value="NM_001193465.1"/>
</dbReference>
<dbReference type="RefSeq" id="NP_001180395.1">
    <molecule id="Q7Z3B3-1"/>
    <property type="nucleotide sequence ID" value="NM_001193466.2"/>
</dbReference>
<dbReference type="RefSeq" id="NP_001366127.1">
    <molecule id="Q7Z3B3-1"/>
    <property type="nucleotide sequence ID" value="NM_001379198.1"/>
</dbReference>
<dbReference type="RefSeq" id="NP_001392783.1">
    <molecule id="Q7Z3B3-1"/>
    <property type="nucleotide sequence ID" value="NM_001405854.1"/>
</dbReference>
<dbReference type="RefSeq" id="NP_001392784.1">
    <molecule id="Q7Z3B3-1"/>
    <property type="nucleotide sequence ID" value="NM_001405855.1"/>
</dbReference>
<dbReference type="RefSeq" id="NP_056258.1">
    <molecule id="Q7Z3B3-1"/>
    <property type="nucleotide sequence ID" value="NM_015443.4"/>
</dbReference>
<dbReference type="RefSeq" id="XP_006721886.1">
    <property type="nucleotide sequence ID" value="XM_006721823.1"/>
</dbReference>
<dbReference type="RefSeq" id="XP_006721887.1">
    <property type="nucleotide sequence ID" value="XM_006721824.3"/>
</dbReference>
<dbReference type="RefSeq" id="XP_047291750.1">
    <molecule id="Q7Z3B3-1"/>
    <property type="nucleotide sequence ID" value="XM_047435794.1"/>
</dbReference>
<dbReference type="PDB" id="4CY1">
    <property type="method" value="X-ray"/>
    <property type="resolution" value="1.50 A"/>
    <property type="chains" value="C/D=585-598"/>
</dbReference>
<dbReference type="PDB" id="4CY2">
    <property type="method" value="X-ray"/>
    <property type="resolution" value="2.00 A"/>
    <property type="chains" value="D=585-598"/>
</dbReference>
<dbReference type="PDBsum" id="4CY1"/>
<dbReference type="PDBsum" id="4CY2"/>
<dbReference type="SMR" id="Q7Z3B3"/>
<dbReference type="BioGRID" id="129744">
    <property type="interactions" value="97"/>
</dbReference>
<dbReference type="ComplexPortal" id="CPX-809">
    <property type="entry name" value="NSL histone acetyltransferase complex"/>
</dbReference>
<dbReference type="CORUM" id="Q7Z3B3"/>
<dbReference type="ELM" id="Q7Z3B3"/>
<dbReference type="FunCoup" id="Q7Z3B3">
    <property type="interactions" value="3199"/>
</dbReference>
<dbReference type="IntAct" id="Q7Z3B3">
    <property type="interactions" value="57"/>
</dbReference>
<dbReference type="MINT" id="Q7Z3B3"/>
<dbReference type="STRING" id="9606.ENSP00000387393"/>
<dbReference type="MoonProt" id="Q7Z3B3"/>
<dbReference type="GlyGen" id="Q7Z3B3">
    <property type="glycosylation" value="1 site, 1 O-linked glycan (1 site)"/>
</dbReference>
<dbReference type="iPTMnet" id="Q7Z3B3"/>
<dbReference type="PhosphoSitePlus" id="Q7Z3B3"/>
<dbReference type="BioMuta" id="KANSL1"/>
<dbReference type="DMDM" id="334302834"/>
<dbReference type="jPOST" id="Q7Z3B3"/>
<dbReference type="MassIVE" id="Q7Z3B3"/>
<dbReference type="PaxDb" id="9606-ENSP00000262419"/>
<dbReference type="PeptideAtlas" id="Q7Z3B3"/>
<dbReference type="ProteomicsDB" id="47521"/>
<dbReference type="ProteomicsDB" id="69022">
    <molecule id="Q7Z3B3-1"/>
</dbReference>
<dbReference type="ProteomicsDB" id="69023">
    <molecule id="Q7Z3B3-2"/>
</dbReference>
<dbReference type="Pumba" id="Q7Z3B3"/>
<dbReference type="Antibodypedia" id="2016">
    <property type="antibodies" value="66 antibodies from 14 providers"/>
</dbReference>
<dbReference type="DNASU" id="284058"/>
<dbReference type="Ensembl" id="ENST00000262419.10">
    <molecule id="Q7Z3B3-1"/>
    <property type="protein sequence ID" value="ENSP00000262419.6"/>
    <property type="gene ID" value="ENSG00000120071.15"/>
</dbReference>
<dbReference type="Ensembl" id="ENST00000432791.7">
    <molecule id="Q7Z3B3-1"/>
    <property type="protein sequence ID" value="ENSP00000387393.3"/>
    <property type="gene ID" value="ENSG00000120071.15"/>
</dbReference>
<dbReference type="Ensembl" id="ENST00000572904.6">
    <molecule id="Q7Z3B3-1"/>
    <property type="protein sequence ID" value="ENSP00000461484.1"/>
    <property type="gene ID" value="ENSG00000120071.15"/>
</dbReference>
<dbReference type="GeneID" id="284058"/>
<dbReference type="KEGG" id="hsa:284058"/>
<dbReference type="MANE-Select" id="ENST00000432791.7">
    <property type="protein sequence ID" value="ENSP00000387393.3"/>
    <property type="RefSeq nucleotide sequence ID" value="NM_015443.4"/>
    <property type="RefSeq protein sequence ID" value="NP_056258.1"/>
</dbReference>
<dbReference type="UCSC" id="uc002ikc.4">
    <molecule id="Q7Z3B3-1"/>
    <property type="organism name" value="human"/>
</dbReference>
<dbReference type="UCSC" id="uc060gjw.1">
    <property type="organism name" value="human"/>
</dbReference>
<dbReference type="AGR" id="HGNC:24565"/>
<dbReference type="CTD" id="284058"/>
<dbReference type="DisGeNET" id="284058"/>
<dbReference type="GeneCards" id="KANSL1"/>
<dbReference type="GeneReviews" id="KANSL1"/>
<dbReference type="HGNC" id="HGNC:24565">
    <property type="gene designation" value="KANSL1"/>
</dbReference>
<dbReference type="HPA" id="ENSG00000120071">
    <property type="expression patterns" value="Low tissue specificity"/>
</dbReference>
<dbReference type="MalaCards" id="KANSL1"/>
<dbReference type="MIM" id="610443">
    <property type="type" value="phenotype"/>
</dbReference>
<dbReference type="MIM" id="612452">
    <property type="type" value="gene"/>
</dbReference>
<dbReference type="neXtProt" id="NX_Q7Z3B3"/>
<dbReference type="OpenTargets" id="ENSG00000120071"/>
<dbReference type="Orphanet" id="363958">
    <property type="disease" value="17q21.31 microdeletion syndrome"/>
</dbReference>
<dbReference type="Orphanet" id="363965">
    <property type="disease" value="Koolen-De Vries syndrome due to a point mutation"/>
</dbReference>
<dbReference type="PharmGKB" id="PA142671604"/>
<dbReference type="VEuPathDB" id="HostDB:ENSG00000120071"/>
<dbReference type="eggNOG" id="ENOG502QYK7">
    <property type="taxonomic scope" value="Eukaryota"/>
</dbReference>
<dbReference type="GeneTree" id="ENSGT00530000063688"/>
<dbReference type="InParanoid" id="Q7Z3B3"/>
<dbReference type="OMA" id="CGGWSTP"/>
<dbReference type="OrthoDB" id="6022640at2759"/>
<dbReference type="PAN-GO" id="Q7Z3B3">
    <property type="GO annotations" value="2 GO annotations based on evolutionary models"/>
</dbReference>
<dbReference type="PhylomeDB" id="Q7Z3B3"/>
<dbReference type="TreeFam" id="TF336511"/>
<dbReference type="PathwayCommons" id="Q7Z3B3"/>
<dbReference type="Reactome" id="R-HSA-3214847">
    <property type="pathway name" value="HATs acetylate histones"/>
</dbReference>
<dbReference type="Reactome" id="R-HSA-9772755">
    <property type="pathway name" value="Formation of WDR5-containing histone-modifying complexes"/>
</dbReference>
<dbReference type="SignaLink" id="Q7Z3B3"/>
<dbReference type="SIGNOR" id="Q7Z3B3"/>
<dbReference type="BioGRID-ORCS" id="284058">
    <property type="hits" value="487 hits in 1168 CRISPR screens"/>
</dbReference>
<dbReference type="ChiTaRS" id="KANSL1">
    <property type="organism name" value="human"/>
</dbReference>
<dbReference type="EvolutionaryTrace" id="Q7Z3B3"/>
<dbReference type="GeneWiki" id="KIAA1267"/>
<dbReference type="GenomeRNAi" id="284058"/>
<dbReference type="Pharos" id="Q7Z3B3">
    <property type="development level" value="Tbio"/>
</dbReference>
<dbReference type="PRO" id="PR:Q7Z3B3"/>
<dbReference type="Proteomes" id="UP000005640">
    <property type="component" value="Chromosome 17"/>
</dbReference>
<dbReference type="RNAct" id="Q7Z3B3">
    <property type="molecule type" value="protein"/>
</dbReference>
<dbReference type="Bgee" id="ENSG00000120071">
    <property type="expression patterns" value="Expressed in bone marrow cell and 176 other cell types or tissues"/>
</dbReference>
<dbReference type="ExpressionAtlas" id="Q7Z3B3">
    <property type="expression patterns" value="baseline and differential"/>
</dbReference>
<dbReference type="GO" id="GO:0000123">
    <property type="term" value="C:histone acetyltransferase complex"/>
    <property type="evidence" value="ECO:0000314"/>
    <property type="project" value="UniProtKB"/>
</dbReference>
<dbReference type="GO" id="GO:0000776">
    <property type="term" value="C:kinetochore"/>
    <property type="evidence" value="ECO:0007669"/>
    <property type="project" value="UniProtKB-KW"/>
</dbReference>
<dbReference type="GO" id="GO:0005739">
    <property type="term" value="C:mitochondrion"/>
    <property type="evidence" value="ECO:0000314"/>
    <property type="project" value="UniProtKB"/>
</dbReference>
<dbReference type="GO" id="GO:0071339">
    <property type="term" value="C:MLL1 complex"/>
    <property type="evidence" value="ECO:0000314"/>
    <property type="project" value="UniProtKB"/>
</dbReference>
<dbReference type="GO" id="GO:0044545">
    <property type="term" value="C:NSL complex"/>
    <property type="evidence" value="ECO:0000314"/>
    <property type="project" value="UniProtKB"/>
</dbReference>
<dbReference type="GO" id="GO:0005654">
    <property type="term" value="C:nucleoplasm"/>
    <property type="evidence" value="ECO:0000314"/>
    <property type="project" value="HPA"/>
</dbReference>
<dbReference type="GO" id="GO:0005634">
    <property type="term" value="C:nucleus"/>
    <property type="evidence" value="ECO:0000314"/>
    <property type="project" value="LIFEdb"/>
</dbReference>
<dbReference type="GO" id="GO:0035035">
    <property type="term" value="F:histone acetyltransferase binding"/>
    <property type="evidence" value="ECO:0000318"/>
    <property type="project" value="GO_Central"/>
</dbReference>
<dbReference type="GO" id="GO:0006325">
    <property type="term" value="P:chromatin organization"/>
    <property type="evidence" value="ECO:0007669"/>
    <property type="project" value="UniProtKB-KW"/>
</dbReference>
<dbReference type="GO" id="GO:0045893">
    <property type="term" value="P:positive regulation of DNA-templated transcription"/>
    <property type="evidence" value="ECO:0000303"/>
    <property type="project" value="ComplexPortal"/>
</dbReference>
<dbReference type="GO" id="GO:1903108">
    <property type="term" value="P:regulation of mitochondrial transcription"/>
    <property type="evidence" value="ECO:0000314"/>
    <property type="project" value="UniProtKB"/>
</dbReference>
<dbReference type="Gene3D" id="6.10.250.3170">
    <property type="match status" value="1"/>
</dbReference>
<dbReference type="InterPro" id="IPR026180">
    <property type="entry name" value="NSL1"/>
</dbReference>
<dbReference type="InterPro" id="IPR029332">
    <property type="entry name" value="PEHE_dom"/>
</dbReference>
<dbReference type="PANTHER" id="PTHR22443:SF14">
    <property type="entry name" value="KAT8 REGULATORY NSL COMPLEX SUBUNIT 1"/>
    <property type="match status" value="1"/>
</dbReference>
<dbReference type="PANTHER" id="PTHR22443">
    <property type="entry name" value="NON-SPECIFIC LETHAL 1, ISOFORM M"/>
    <property type="match status" value="1"/>
</dbReference>
<dbReference type="Pfam" id="PF15275">
    <property type="entry name" value="PEHE"/>
    <property type="match status" value="1"/>
</dbReference>
<dbReference type="SMART" id="SM01300">
    <property type="entry name" value="PEHE"/>
    <property type="match status" value="1"/>
</dbReference>
<dbReference type="PROSITE" id="PS52052">
    <property type="entry name" value="PEHE"/>
    <property type="match status" value="1"/>
</dbReference>
<protein>
    <recommendedName>
        <fullName>KAT8 regulatory NSL complex subunit 1</fullName>
    </recommendedName>
    <alternativeName>
        <fullName>MLL1/MLL complex subunit KANSL1</fullName>
    </alternativeName>
    <alternativeName>
        <fullName>MSL1 homolog 1</fullName>
        <shortName>hMSL1v1</shortName>
    </alternativeName>
    <alternativeName>
        <fullName>NSL complex protein NSL1</fullName>
    </alternativeName>
    <alternativeName>
        <fullName>Non-specific lethal 1 homolog</fullName>
    </alternativeName>
</protein>
<proteinExistence type="evidence at protein level"/>
<accession>Q7Z3B3</accession>
<accession>A8K5E4</accession>
<accession>B3KT49</accession>
<accession>I3L4J3</accession>
<accession>Q6AW85</accession>
<accession>Q8IYH1</accession>
<accession>Q9BRH0</accession>
<accession>Q9NTE7</accession>
<accession>Q9UFT0</accession>
<accession>Q9ULF3</accession>
<name>KANL1_HUMAN</name>
<keyword id="KW-0002">3D-structure</keyword>
<keyword id="KW-0007">Acetylation</keyword>
<keyword id="KW-0025">Alternative splicing</keyword>
<keyword id="KW-0137">Centromere</keyword>
<keyword id="KW-0156">Chromatin regulator</keyword>
<keyword id="KW-0158">Chromosome</keyword>
<keyword id="KW-0175">Coiled coil</keyword>
<keyword id="KW-0963">Cytoplasm</keyword>
<keyword id="KW-0206">Cytoskeleton</keyword>
<keyword id="KW-0225">Disease variant</keyword>
<keyword id="KW-0991">Intellectual disability</keyword>
<keyword id="KW-1017">Isopeptide bond</keyword>
<keyword id="KW-0995">Kinetochore</keyword>
<keyword id="KW-0493">Microtubule</keyword>
<keyword id="KW-0496">Mitochondrion</keyword>
<keyword id="KW-0539">Nucleus</keyword>
<keyword id="KW-0597">Phosphoprotein</keyword>
<keyword id="KW-1267">Proteomics identification</keyword>
<keyword id="KW-1185">Reference proteome</keyword>
<keyword id="KW-0832">Ubl conjugation</keyword>